<evidence type="ECO:0000256" key="1">
    <source>
        <dbReference type="SAM" id="MobiDB-lite"/>
    </source>
</evidence>
<evidence type="ECO:0000305" key="2"/>
<protein>
    <recommendedName>
        <fullName>Stress response regulator gls24 homolog</fullName>
    </recommendedName>
</protein>
<gene>
    <name type="ordered locus">SPy_1262</name>
    <name type="ordered locus">M5005_Spy0973</name>
</gene>
<proteinExistence type="inferred from homology"/>
<sequence length="179" mass="19944">MTETYIKNTSKDLTSAIRGQLTYDDKVIEKIVGLALENVDGLLGVNGGFFANLKDKLVNTESVRDGVNVEVGKKQVAVDLDIVAEYQKHVPTIYDSIKSIVEEEVKRMTDLDVIEVNVKVVDIKTKEQFEAEKVSLQDKVSDMARSTSEFTSHQVENVKASVDNGVEKLQDQKAEPRVK</sequence>
<organism>
    <name type="scientific">Streptococcus pyogenes serotype M1</name>
    <dbReference type="NCBI Taxonomy" id="301447"/>
    <lineage>
        <taxon>Bacteria</taxon>
        <taxon>Bacillati</taxon>
        <taxon>Bacillota</taxon>
        <taxon>Bacilli</taxon>
        <taxon>Lactobacillales</taxon>
        <taxon>Streptococcaceae</taxon>
        <taxon>Streptococcus</taxon>
    </lineage>
</organism>
<feature type="chain" id="PRO_0000228681" description="Stress response regulator gls24 homolog">
    <location>
        <begin position="1"/>
        <end position="179"/>
    </location>
</feature>
<feature type="region of interest" description="Disordered" evidence="1">
    <location>
        <begin position="147"/>
        <end position="179"/>
    </location>
</feature>
<feature type="compositionally biased region" description="Basic and acidic residues" evidence="1">
    <location>
        <begin position="165"/>
        <end position="179"/>
    </location>
</feature>
<accession>Q99ZE5</accession>
<accession>Q48YI1</accession>
<comment type="similarity">
    <text evidence="2">Belongs to the asp23 family.</text>
</comment>
<dbReference type="EMBL" id="AE004092">
    <property type="protein sequence ID" value="AAK34116.1"/>
    <property type="molecule type" value="Genomic_DNA"/>
</dbReference>
<dbReference type="EMBL" id="CP000017">
    <property type="protein sequence ID" value="AAZ51591.1"/>
    <property type="molecule type" value="Genomic_DNA"/>
</dbReference>
<dbReference type="RefSeq" id="NP_269395.1">
    <property type="nucleotide sequence ID" value="NC_002737.2"/>
</dbReference>
<dbReference type="PaxDb" id="1314-HKU360_01016"/>
<dbReference type="KEGG" id="spy:SPy_1262"/>
<dbReference type="KEGG" id="spz:M5005_Spy0973"/>
<dbReference type="PATRIC" id="fig|160490.10.peg.1105"/>
<dbReference type="HOGENOM" id="CLU_113198_1_1_9"/>
<dbReference type="OMA" id="IIMEYGH"/>
<dbReference type="Proteomes" id="UP000000750">
    <property type="component" value="Chromosome"/>
</dbReference>
<dbReference type="InterPro" id="IPR005531">
    <property type="entry name" value="Asp23"/>
</dbReference>
<dbReference type="PANTHER" id="PTHR34297:SF3">
    <property type="entry name" value="ALKALINE SHOCK PROTEIN 23"/>
    <property type="match status" value="1"/>
</dbReference>
<dbReference type="PANTHER" id="PTHR34297">
    <property type="entry name" value="HYPOTHETICAL CYTOSOLIC PROTEIN-RELATED"/>
    <property type="match status" value="1"/>
</dbReference>
<dbReference type="Pfam" id="PF03780">
    <property type="entry name" value="Asp23"/>
    <property type="match status" value="1"/>
</dbReference>
<keyword id="KW-1185">Reference proteome</keyword>
<name>GLS24_STRP1</name>
<reference key="1">
    <citation type="journal article" date="2001" name="Proc. Natl. Acad. Sci. U.S.A.">
        <title>Complete genome sequence of an M1 strain of Streptococcus pyogenes.</title>
        <authorList>
            <person name="Ferretti J.J."/>
            <person name="McShan W.M."/>
            <person name="Ajdic D.J."/>
            <person name="Savic D.J."/>
            <person name="Savic G."/>
            <person name="Lyon K."/>
            <person name="Primeaux C."/>
            <person name="Sezate S."/>
            <person name="Suvorov A.N."/>
            <person name="Kenton S."/>
            <person name="Lai H.S."/>
            <person name="Lin S.P."/>
            <person name="Qian Y."/>
            <person name="Jia H.G."/>
            <person name="Najar F.Z."/>
            <person name="Ren Q."/>
            <person name="Zhu H."/>
            <person name="Song L."/>
            <person name="White J."/>
            <person name="Yuan X."/>
            <person name="Clifton S.W."/>
            <person name="Roe B.A."/>
            <person name="McLaughlin R.E."/>
        </authorList>
    </citation>
    <scope>NUCLEOTIDE SEQUENCE [LARGE SCALE GENOMIC DNA]</scope>
    <source>
        <strain>ATCC 700294 / SF370 / Serotype M1</strain>
    </source>
</reference>
<reference key="2">
    <citation type="journal article" date="2005" name="J. Infect. Dis.">
        <title>Evolutionary origin and emergence of a highly successful clone of serotype M1 group A Streptococcus involved multiple horizontal gene transfer events.</title>
        <authorList>
            <person name="Sumby P."/>
            <person name="Porcella S.F."/>
            <person name="Madrigal A.G."/>
            <person name="Barbian K.D."/>
            <person name="Virtaneva K."/>
            <person name="Ricklefs S.M."/>
            <person name="Sturdevant D.E."/>
            <person name="Graham M.R."/>
            <person name="Vuopio-Varkila J."/>
            <person name="Hoe N.P."/>
            <person name="Musser J.M."/>
        </authorList>
    </citation>
    <scope>NUCLEOTIDE SEQUENCE [LARGE SCALE GENOMIC DNA]</scope>
    <source>
        <strain>ATCC BAA-947 / MGAS5005 / Serotype M1</strain>
    </source>
</reference>